<feature type="chain" id="PRO_1000137873" description="tRNA(Ile)-lysidine synthase">
    <location>
        <begin position="1"/>
        <end position="431"/>
    </location>
</feature>
<feature type="binding site" evidence="1">
    <location>
        <begin position="25"/>
        <end position="30"/>
    </location>
    <ligand>
        <name>ATP</name>
        <dbReference type="ChEBI" id="CHEBI:30616"/>
    </ligand>
</feature>
<gene>
    <name evidence="1" type="primary">tilS</name>
    <name type="ordered locus">LGAS_0275</name>
</gene>
<name>TILS_LACGA</name>
<accession>Q046D9</accession>
<protein>
    <recommendedName>
        <fullName evidence="1">tRNA(Ile)-lysidine synthase</fullName>
        <ecNumber evidence="1">6.3.4.19</ecNumber>
    </recommendedName>
    <alternativeName>
        <fullName evidence="1">tRNA(Ile)-2-lysyl-cytidine synthase</fullName>
    </alternativeName>
    <alternativeName>
        <fullName evidence="1">tRNA(Ile)-lysidine synthetase</fullName>
    </alternativeName>
</protein>
<proteinExistence type="inferred from homology"/>
<keyword id="KW-0067">ATP-binding</keyword>
<keyword id="KW-0963">Cytoplasm</keyword>
<keyword id="KW-0436">Ligase</keyword>
<keyword id="KW-0547">Nucleotide-binding</keyword>
<keyword id="KW-0819">tRNA processing</keyword>
<reference key="1">
    <citation type="journal article" date="2006" name="Proc. Natl. Acad. Sci. U.S.A.">
        <title>Comparative genomics of the lactic acid bacteria.</title>
        <authorList>
            <person name="Makarova K.S."/>
            <person name="Slesarev A."/>
            <person name="Wolf Y.I."/>
            <person name="Sorokin A."/>
            <person name="Mirkin B."/>
            <person name="Koonin E.V."/>
            <person name="Pavlov A."/>
            <person name="Pavlova N."/>
            <person name="Karamychev V."/>
            <person name="Polouchine N."/>
            <person name="Shakhova V."/>
            <person name="Grigoriev I."/>
            <person name="Lou Y."/>
            <person name="Rohksar D."/>
            <person name="Lucas S."/>
            <person name="Huang K."/>
            <person name="Goodstein D.M."/>
            <person name="Hawkins T."/>
            <person name="Plengvidhya V."/>
            <person name="Welker D."/>
            <person name="Hughes J."/>
            <person name="Goh Y."/>
            <person name="Benson A."/>
            <person name="Baldwin K."/>
            <person name="Lee J.-H."/>
            <person name="Diaz-Muniz I."/>
            <person name="Dosti B."/>
            <person name="Smeianov V."/>
            <person name="Wechter W."/>
            <person name="Barabote R."/>
            <person name="Lorca G."/>
            <person name="Altermann E."/>
            <person name="Barrangou R."/>
            <person name="Ganesan B."/>
            <person name="Xie Y."/>
            <person name="Rawsthorne H."/>
            <person name="Tamir D."/>
            <person name="Parker C."/>
            <person name="Breidt F."/>
            <person name="Broadbent J.R."/>
            <person name="Hutkins R."/>
            <person name="O'Sullivan D."/>
            <person name="Steele J."/>
            <person name="Unlu G."/>
            <person name="Saier M.H. Jr."/>
            <person name="Klaenhammer T."/>
            <person name="Richardson P."/>
            <person name="Kozyavkin S."/>
            <person name="Weimer B.C."/>
            <person name="Mills D.A."/>
        </authorList>
    </citation>
    <scope>NUCLEOTIDE SEQUENCE [LARGE SCALE GENOMIC DNA]</scope>
    <source>
        <strain>ATCC 33323 / DSM 20243 / BCRC 14619 / CIP 102991 / JCM 1131 / KCTC 3163 / NCIMB 11718 / NCTC 13722 / AM63</strain>
    </source>
</reference>
<sequence length="431" mass="50535">MTEFTNFFTKNNIEIKNKKFLLAASGGPDSVALFHMLVNFLPNPSKQLIVAHLDHCLRKDSYLESELLQKLTTAFKIKLIEKSWPVALHPQTGIEAKAREFRYAFLAHTGKKYQVDYLLTAHHGDDLIENILLKFIRSGDVAEMNSLQIVGNLDSMRLLRPLIKYSKDQLLEYDKRNGLDYIEDETNFEDDTLRNRLRHYVVPLLKKETNHLVENAYRFSESAALLSDCQNSFFESLILPIDFGKALRGKKSDLINLNENQLAAFFDYLVYKKWHQRVHFDEIRRRKKATFNKENFQLIFYQDYYYLINRNGLTPIDSKKKKIKLDEKFSLNGKEYLISHDKKIGNLVGYFYGVRTDFLEVGSLPQGSKLRLADGRQTKAKKKFAENGIPLILRPYCLTIWQKENPVYVENVYQNQEYNANFVRYNVYIYL</sequence>
<comment type="function">
    <text evidence="1">Ligates lysine onto the cytidine present at position 34 of the AUA codon-specific tRNA(Ile) that contains the anticodon CAU, in an ATP-dependent manner. Cytidine is converted to lysidine, thus changing the amino acid specificity of the tRNA from methionine to isoleucine.</text>
</comment>
<comment type="catalytic activity">
    <reaction evidence="1">
        <text>cytidine(34) in tRNA(Ile2) + L-lysine + ATP = lysidine(34) in tRNA(Ile2) + AMP + diphosphate + H(+)</text>
        <dbReference type="Rhea" id="RHEA:43744"/>
        <dbReference type="Rhea" id="RHEA-COMP:10625"/>
        <dbReference type="Rhea" id="RHEA-COMP:10670"/>
        <dbReference type="ChEBI" id="CHEBI:15378"/>
        <dbReference type="ChEBI" id="CHEBI:30616"/>
        <dbReference type="ChEBI" id="CHEBI:32551"/>
        <dbReference type="ChEBI" id="CHEBI:33019"/>
        <dbReference type="ChEBI" id="CHEBI:82748"/>
        <dbReference type="ChEBI" id="CHEBI:83665"/>
        <dbReference type="ChEBI" id="CHEBI:456215"/>
        <dbReference type="EC" id="6.3.4.19"/>
    </reaction>
</comment>
<comment type="subcellular location">
    <subcellularLocation>
        <location evidence="1">Cytoplasm</location>
    </subcellularLocation>
</comment>
<comment type="domain">
    <text>The N-terminal region contains the highly conserved SGGXDS motif, predicted to be a P-loop motif involved in ATP binding.</text>
</comment>
<comment type="similarity">
    <text evidence="1">Belongs to the tRNA(Ile)-lysidine synthase family.</text>
</comment>
<evidence type="ECO:0000255" key="1">
    <source>
        <dbReference type="HAMAP-Rule" id="MF_01161"/>
    </source>
</evidence>
<dbReference type="EC" id="6.3.4.19" evidence="1"/>
<dbReference type="EMBL" id="CP000413">
    <property type="protein sequence ID" value="ABJ59683.1"/>
    <property type="molecule type" value="Genomic_DNA"/>
</dbReference>
<dbReference type="RefSeq" id="WP_003647841.1">
    <property type="nucleotide sequence ID" value="NZ_WBMG01000001.1"/>
</dbReference>
<dbReference type="SMR" id="Q046D9"/>
<dbReference type="GeneID" id="29638947"/>
<dbReference type="KEGG" id="lga:LGAS_0275"/>
<dbReference type="HOGENOM" id="CLU_018869_0_2_9"/>
<dbReference type="BioCyc" id="LGAS324831:G1G6Y-273-MONOMER"/>
<dbReference type="Proteomes" id="UP000000664">
    <property type="component" value="Chromosome"/>
</dbReference>
<dbReference type="GO" id="GO:0005737">
    <property type="term" value="C:cytoplasm"/>
    <property type="evidence" value="ECO:0007669"/>
    <property type="project" value="UniProtKB-SubCell"/>
</dbReference>
<dbReference type="GO" id="GO:0005524">
    <property type="term" value="F:ATP binding"/>
    <property type="evidence" value="ECO:0007669"/>
    <property type="project" value="UniProtKB-UniRule"/>
</dbReference>
<dbReference type="GO" id="GO:0032267">
    <property type="term" value="F:tRNA(Ile)-lysidine synthase activity"/>
    <property type="evidence" value="ECO:0007669"/>
    <property type="project" value="UniProtKB-EC"/>
</dbReference>
<dbReference type="GO" id="GO:0006400">
    <property type="term" value="P:tRNA modification"/>
    <property type="evidence" value="ECO:0007669"/>
    <property type="project" value="UniProtKB-UniRule"/>
</dbReference>
<dbReference type="CDD" id="cd01992">
    <property type="entry name" value="TilS_N"/>
    <property type="match status" value="1"/>
</dbReference>
<dbReference type="Gene3D" id="3.40.50.620">
    <property type="entry name" value="HUPs"/>
    <property type="match status" value="1"/>
</dbReference>
<dbReference type="HAMAP" id="MF_01161">
    <property type="entry name" value="tRNA_Ile_lys_synt"/>
    <property type="match status" value="1"/>
</dbReference>
<dbReference type="InterPro" id="IPR014729">
    <property type="entry name" value="Rossmann-like_a/b/a_fold"/>
</dbReference>
<dbReference type="InterPro" id="IPR011063">
    <property type="entry name" value="TilS/TtcA_N"/>
</dbReference>
<dbReference type="InterPro" id="IPR012094">
    <property type="entry name" value="tRNA_Ile_lys_synt"/>
</dbReference>
<dbReference type="InterPro" id="IPR012795">
    <property type="entry name" value="tRNA_Ile_lys_synt_N"/>
</dbReference>
<dbReference type="NCBIfam" id="TIGR02432">
    <property type="entry name" value="lysidine_TilS_N"/>
    <property type="match status" value="1"/>
</dbReference>
<dbReference type="PANTHER" id="PTHR43033">
    <property type="entry name" value="TRNA(ILE)-LYSIDINE SYNTHASE-RELATED"/>
    <property type="match status" value="1"/>
</dbReference>
<dbReference type="PANTHER" id="PTHR43033:SF1">
    <property type="entry name" value="TRNA(ILE)-LYSIDINE SYNTHASE-RELATED"/>
    <property type="match status" value="1"/>
</dbReference>
<dbReference type="Pfam" id="PF01171">
    <property type="entry name" value="ATP_bind_3"/>
    <property type="match status" value="1"/>
</dbReference>
<dbReference type="SUPFAM" id="SSF52402">
    <property type="entry name" value="Adenine nucleotide alpha hydrolases-like"/>
    <property type="match status" value="1"/>
</dbReference>
<organism>
    <name type="scientific">Lactobacillus gasseri (strain ATCC 33323 / DSM 20243 / BCRC 14619 / CIP 102991 / JCM 1131 / KCTC 3163 / NCIMB 11718 / NCTC 13722 / AM63)</name>
    <dbReference type="NCBI Taxonomy" id="324831"/>
    <lineage>
        <taxon>Bacteria</taxon>
        <taxon>Bacillati</taxon>
        <taxon>Bacillota</taxon>
        <taxon>Bacilli</taxon>
        <taxon>Lactobacillales</taxon>
        <taxon>Lactobacillaceae</taxon>
        <taxon>Lactobacillus</taxon>
    </lineage>
</organism>